<organism>
    <name type="scientific">Human immunodeficiency virus type 1 group M subtype J (isolate SE9280)</name>
    <name type="common">HIV-1</name>
    <dbReference type="NCBI Taxonomy" id="388905"/>
    <lineage>
        <taxon>Viruses</taxon>
        <taxon>Riboviria</taxon>
        <taxon>Pararnavirae</taxon>
        <taxon>Artverviricota</taxon>
        <taxon>Revtraviricetes</taxon>
        <taxon>Ortervirales</taxon>
        <taxon>Retroviridae</taxon>
        <taxon>Orthoretrovirinae</taxon>
        <taxon>Lentivirus</taxon>
        <taxon>Human immunodeficiency virus type 1</taxon>
    </lineage>
</organism>
<proteinExistence type="inferred from homology"/>
<gene>
    <name evidence="1" type="primary">nef</name>
</gene>
<name>NEF_HV1S2</name>
<reference key="1">
    <citation type="journal article" date="1999" name="AIDS Res. Hum. Retroviruses">
        <title>Virtually full-length sequences of HIV type 1 subtype J reference strains.</title>
        <authorList>
            <person name="Laukkanen T."/>
            <person name="Albert J."/>
            <person name="Liitsola K."/>
            <person name="Green S.D."/>
            <person name="Carr J.K."/>
            <person name="Leitner T."/>
            <person name="McCutchan F.E."/>
            <person name="Salminen M.O."/>
        </authorList>
    </citation>
    <scope>NUCLEOTIDE SEQUENCE [GENOMIC DNA]</scope>
</reference>
<accession>Q9WC61</accession>
<dbReference type="EMBL" id="AF082394">
    <property type="protein sequence ID" value="AAD17762.1"/>
    <property type="molecule type" value="Genomic_DNA"/>
</dbReference>
<dbReference type="SMR" id="Q9WC61"/>
<dbReference type="Proteomes" id="UP000135310">
    <property type="component" value="Segment"/>
</dbReference>
<dbReference type="GO" id="GO:0005576">
    <property type="term" value="C:extracellular region"/>
    <property type="evidence" value="ECO:0007669"/>
    <property type="project" value="UniProtKB-SubCell"/>
</dbReference>
<dbReference type="GO" id="GO:0044178">
    <property type="term" value="C:host cell Golgi membrane"/>
    <property type="evidence" value="ECO:0007669"/>
    <property type="project" value="UniProtKB-SubCell"/>
</dbReference>
<dbReference type="GO" id="GO:0020002">
    <property type="term" value="C:host cell plasma membrane"/>
    <property type="evidence" value="ECO:0007669"/>
    <property type="project" value="UniProtKB-SubCell"/>
</dbReference>
<dbReference type="GO" id="GO:0016020">
    <property type="term" value="C:membrane"/>
    <property type="evidence" value="ECO:0007669"/>
    <property type="project" value="UniProtKB-UniRule"/>
</dbReference>
<dbReference type="GO" id="GO:0044423">
    <property type="term" value="C:virion component"/>
    <property type="evidence" value="ECO:0007669"/>
    <property type="project" value="UniProtKB-UniRule"/>
</dbReference>
<dbReference type="GO" id="GO:0005525">
    <property type="term" value="F:GTP binding"/>
    <property type="evidence" value="ECO:0007669"/>
    <property type="project" value="UniProtKB-UniRule"/>
</dbReference>
<dbReference type="GO" id="GO:0017124">
    <property type="term" value="F:SH3 domain binding"/>
    <property type="evidence" value="ECO:0007669"/>
    <property type="project" value="UniProtKB-UniRule"/>
</dbReference>
<dbReference type="GO" id="GO:0046776">
    <property type="term" value="P:symbiont-mediated suppression of host antigen processing and presentation of peptide antigen via MHC class I"/>
    <property type="evidence" value="ECO:0007669"/>
    <property type="project" value="UniProtKB-UniRule"/>
</dbReference>
<dbReference type="GO" id="GO:0039505">
    <property type="term" value="P:symbiont-mediated suppression of host antigen processing and presentation of peptide antigen via MHC class II"/>
    <property type="evidence" value="ECO:0007669"/>
    <property type="project" value="UniProtKB-UniRule"/>
</dbReference>
<dbReference type="GO" id="GO:0140321">
    <property type="term" value="P:symbiont-mediated suppression of host autophagy"/>
    <property type="evidence" value="ECO:0007669"/>
    <property type="project" value="UniProtKB-KW"/>
</dbReference>
<dbReference type="Gene3D" id="4.10.890.10">
    <property type="entry name" value="HIV 1 nef anchor domain"/>
    <property type="match status" value="1"/>
</dbReference>
<dbReference type="Gene3D" id="3.30.62.10">
    <property type="entry name" value="Nef Regulatory Factor"/>
    <property type="match status" value="1"/>
</dbReference>
<dbReference type="HAMAP" id="MF_04078">
    <property type="entry name" value="NEF_HIV"/>
    <property type="match status" value="1"/>
</dbReference>
<dbReference type="InterPro" id="IPR027480">
    <property type="entry name" value="HIV-1_Nef_anchor_sf"/>
</dbReference>
<dbReference type="InterPro" id="IPR027481">
    <property type="entry name" value="HIV-1_Nef_core_sf"/>
</dbReference>
<dbReference type="InterPro" id="IPR001558">
    <property type="entry name" value="HIV_Nef"/>
</dbReference>
<dbReference type="Pfam" id="PF00469">
    <property type="entry name" value="F-protein"/>
    <property type="match status" value="1"/>
</dbReference>
<dbReference type="SUPFAM" id="SSF55671">
    <property type="entry name" value="Regulatory factor Nef"/>
    <property type="match status" value="1"/>
</dbReference>
<evidence type="ECO:0000255" key="1">
    <source>
        <dbReference type="HAMAP-Rule" id="MF_04078"/>
    </source>
</evidence>
<evidence type="ECO:0000256" key="2">
    <source>
        <dbReference type="SAM" id="MobiDB-lite"/>
    </source>
</evidence>
<organismHost>
    <name type="scientific">Homo sapiens</name>
    <name type="common">Human</name>
    <dbReference type="NCBI Taxonomy" id="9606"/>
</organismHost>
<sequence>MGNKWSKSWPQVRERMRRAPAPAADGVGAVSQDLAKHGAITSSNTAATNADCAWLEAQTEEEVGFPVKPQIPLRPMTYKGAVDLSFFLKEKGGLDGLIYSKKRQEILDLWVHNTQGYFPDWQNYTPGPGIRYPLTFGWCYKLVPVDPSEVEEANEGENNCLLHPICQHGIEDEEREVLQWKFDSSLARRHIARELHPEFYKDC</sequence>
<feature type="initiator methionine" description="Removed; by host" evidence="1">
    <location>
        <position position="1"/>
    </location>
</feature>
<feature type="chain" id="PRO_0000244807" description="Protein Nef" evidence="1">
    <location>
        <begin position="2"/>
        <end position="203"/>
    </location>
</feature>
<feature type="chain" id="PRO_0000244808" description="C-terminal core protein" evidence="1">
    <location>
        <begin position="55"/>
        <end position="203"/>
    </location>
</feature>
<feature type="region of interest" description="Disordered" evidence="2">
    <location>
        <begin position="1"/>
        <end position="25"/>
    </location>
</feature>
<feature type="region of interest" description="Acidic; interacts with host PACS1 and PACS2; stabilizes the interaction of NEF/MHC-I with host AP1M1; necessary for MHC-I internalization" evidence="1">
    <location>
        <begin position="59"/>
        <end position="62"/>
    </location>
</feature>
<feature type="region of interest" description="SH3-binding; interaction with Src family tyrosine kinases" evidence="1">
    <location>
        <begin position="66"/>
        <end position="75"/>
    </location>
</feature>
<feature type="region of interest" description="Mediates dimerization, Nef-PTE1 interaction" evidence="1">
    <location>
        <begin position="105"/>
        <end position="121"/>
    </location>
</feature>
<feature type="region of interest" description="Binding to ATP6V1H" evidence="1">
    <location>
        <begin position="145"/>
        <end position="177"/>
    </location>
</feature>
<feature type="short sequence motif" description="PxxP; stabilizes the interaction of NEF/MHC-I with host AP1M1; necessary for MHC-I internalization" evidence="1">
    <location>
        <begin position="69"/>
        <end position="72"/>
    </location>
</feature>
<feature type="short sequence motif" description="Dileucine internalization motif; necessary for CD4 internalization" evidence="1">
    <location>
        <begin position="161"/>
        <end position="162"/>
    </location>
</feature>
<feature type="short sequence motif" description="Diacidic; necessary for CD4 internalization" evidence="1">
    <location>
        <begin position="171"/>
        <end position="172"/>
    </location>
</feature>
<feature type="site" description="Might play a role in AP-1 recruitment to the Nef-MHC-I complex" evidence="1">
    <location>
        <position position="16"/>
    </location>
</feature>
<feature type="site" description="Cleavage; by viral protease" evidence="1">
    <location>
        <begin position="54"/>
        <end position="55"/>
    </location>
</feature>
<feature type="modified residue" description="Phosphoserine; by host" evidence="1">
    <location>
        <position position="6"/>
    </location>
</feature>
<feature type="lipid moiety-binding region" description="N-myristoyl glycine; by host" evidence="1">
    <location>
        <position position="2"/>
    </location>
</feature>
<protein>
    <recommendedName>
        <fullName evidence="1">Protein Nef</fullName>
    </recommendedName>
    <alternativeName>
        <fullName evidence="1">3'ORF</fullName>
    </alternativeName>
    <alternativeName>
        <fullName evidence="1">Negative factor</fullName>
        <shortName evidence="1">F-protein</shortName>
    </alternativeName>
    <component>
        <recommendedName>
            <fullName evidence="1">C-terminal core protein</fullName>
        </recommendedName>
    </component>
</protein>
<keyword id="KW-0014">AIDS</keyword>
<keyword id="KW-0053">Apoptosis</keyword>
<keyword id="KW-0244">Early protein</keyword>
<keyword id="KW-1032">Host cell membrane</keyword>
<keyword id="KW-1040">Host Golgi apparatus</keyword>
<keyword id="KW-1043">Host membrane</keyword>
<keyword id="KW-0945">Host-virus interaction</keyword>
<keyword id="KW-1080">Inhibition of host adaptive immune response by virus</keyword>
<keyword id="KW-1083">Inhibition of host autophagy by virus</keyword>
<keyword id="KW-1115">Inhibition of host MHC class I molecule presentation by virus</keyword>
<keyword id="KW-1116">Inhibition of host MHC class II molecule presentation by virus</keyword>
<keyword id="KW-0449">Lipoprotein</keyword>
<keyword id="KW-0472">Membrane</keyword>
<keyword id="KW-0519">Myristate</keyword>
<keyword id="KW-0597">Phosphoprotein</keyword>
<keyword id="KW-0964">Secreted</keyword>
<keyword id="KW-0729">SH3-binding</keyword>
<keyword id="KW-0899">Viral immunoevasion</keyword>
<keyword id="KW-0946">Virion</keyword>
<keyword id="KW-0843">Virulence</keyword>
<comment type="function">
    <text evidence="1">Factor of infectivity and pathogenicity, required for optimal virus replication. Alters numerous pathways of T-lymphocyte function and down-regulates immunity surface molecules in order to evade host defense and increase viral infectivity. Alters the functionality of other immunity cells, like dendritic cells, monocytes/macrophages and NK cells.</text>
</comment>
<comment type="function">
    <text evidence="1">In infected CD4(+) T-lymphocytes, down-regulates the surface MHC-I, mature MHC-II, CD4, CD28, CCR5 and CXCR4 molecules. Mediates internalization and degradation of host CD4 through the interaction of with the cytoplasmic tail of CD4, the recruitment of AP-2 (clathrin adapter protein complex 2), internalization through clathrin coated pits, and subsequent transport to endosomes and lysosomes for degradation. Diverts host MHC-I molecules to the trans-Golgi network-associated endosomal compartments by an endocytic pathway to finally target them for degradation. MHC-I down-regulation may involve AP-1 (clathrin adapter protein complex 1) or possibly Src family kinase-ZAP70/Syk-PI3K cascade recruited by PACS2. In consequence infected cells are masked for immune recognition by cytotoxic T-lymphocytes. Decreasing the number of immune receptors also prevents reinfection by more HIV particles (superinfection). Down-regulates host SERINC3 and SERINC5 thereby excluding these proteins from the viral particles. Virion infectivity is drastically higher when SERINC3 or SERINC5 are excluded from the viral envelope, because these host antiviral proteins impair the membrane fusion event necessary for subsequent virion penetration.</text>
</comment>
<comment type="function">
    <text evidence="1">Bypasses host T-cell signaling by inducing a transcriptional program nearly identical to that of anti-CD3 cell activation. Interaction with TCR-zeta chain up-regulates the Fas ligand (FasL). Increasing surface FasL molecules and decreasing surface MHC-I molecules on infected CD4(+) cells send attacking cytotoxic CD8+ T-lymphocytes into apoptosis.</text>
</comment>
<comment type="function">
    <text evidence="1">Plays a role in optimizing the host cell environment for viral replication without causing cell death by apoptosis. Protects the infected cells from apoptosis in order to keep them alive until the next virus generation is ready to strike. Inhibits the Fas and TNFR-mediated death signals by blocking MAP3K5/ASK1. Decreases the half-life of TP53, protecting the infected cell against p53-mediated apoptosis. Inhibits the apoptotic signals regulated by the Bcl-2 family proteins through the formation of a Nef/PI3-kinase/PAK2 complex that leads to activation of PAK2 and induces phosphorylation of host BAD.</text>
</comment>
<comment type="function">
    <text evidence="1">Extracellular Nef protein targets CD4(+) T-lymphocytes for apoptosis by interacting with CXCR4 surface receptors.</text>
</comment>
<comment type="subunit">
    <text evidence="1">Monomer; cytosolic form. Homodimer; membrane bound form. Interacts with Nef associated p21-activated kinase (PAK2); this interaction activates PAK2. Associates with the Nef-MHC-I-AP1 complex; this complex is required for MHC-I internalization. Interacts (via C-terminus) with host PI3-kinase. Interacts with host PACS1; this interaction seems to be weak. Interacts with host PACS2. Interacts with host LCK and MAPK3; these interactions inhibit the kinase activity of the latter. Interacts with host ATP6V1H; this interaction may play a role in CD4 endocytosis. Associates with the CD4-Nef-AP2 complex; this complex is required for CD4 internalization. Interacts with host AP2 subunit alpha and AP2 subunit sigma2. Interacts with TCR-zeta chain; this interaction up-regulates the Fas ligand (FasL) surface expression. Interacts with host HCK, LYN, and SRC; these interactions activate the Src family kinases. Interacts with MAP3K5; this interaction inhibits the Fas and TNFR-mediated death signals. Interacts with beta-COP and PTE1. Interacts with human RACK1; this increases Nef phosphorylation by PKC. Interacts with TP53; this interaction decreases the half-life of TP53, protecting the infected cell against p53-mediated apoptosis.</text>
</comment>
<comment type="subcellular location">
    <subcellularLocation>
        <location evidence="1">Host cell membrane</location>
        <topology evidence="1">Lipid-anchor</topology>
        <orientation evidence="1">Cytoplasmic side</orientation>
    </subcellularLocation>
    <subcellularLocation>
        <location evidence="1">Virion</location>
    </subcellularLocation>
    <subcellularLocation>
        <location evidence="1">Secreted</location>
    </subcellularLocation>
    <subcellularLocation>
        <location evidence="1">Host Golgi apparatus membrane</location>
    </subcellularLocation>
    <text evidence="1">TGN localization requires PACS1. Associates with the inner plasma membrane through its N-terminal domain. Nef stimulates its own export via the release of exosomes. Incorporated in virions at a rate of about 10 molecules per virion, where it is cleaved.</text>
</comment>
<comment type="induction">
    <text evidence="1">Expressed early in the viral replication cycle.</text>
</comment>
<comment type="domain">
    <text evidence="1">The N-terminal domain is composed of the N-myristoyl glycine and of a cluster of positively charged amino acids. It is required for inner plasma membrane targeting of Nef and virion incorporation, and thereby for infectivity. This domain is also involved in binding to TP53.</text>
</comment>
<comment type="domain">
    <text evidence="1">The SH3-binding domain constituted of PxxP motifs mediates binding to several Src family proteins thereby regulating their tyrosine kinase activity. The same motifs also mediates the association with MAPK3, PI3-kinase and TCR-zeta.</text>
</comment>
<comment type="domain">
    <text evidence="1">The dileucine internalization motif and a diacidic motif seem to be required for binding to AP-2.</text>
</comment>
<comment type="domain">
    <text evidence="1">The acidic region binds to the sorting protein PACS-2, which targets Nef to the paranuclear region, enabling the PxxP motif to direct assembly of an SFK/ZAP-70/PI3K complex that accelerates endocytosis of cell-surface MHC-I.</text>
</comment>
<comment type="PTM">
    <text evidence="1">The virion-associated Nef proteins are cleaved by the viral protease to release the soluble C-terminal core protein. Nef is probably cleaved concomitantly with viral structural proteins on maturation of virus particles.</text>
</comment>
<comment type="PTM">
    <text evidence="1">Myristoylated.</text>
</comment>
<comment type="PTM">
    <text evidence="1">Phosphorylated on serine residues, probably by host PKCdelta and theta.</text>
</comment>
<comment type="miscellaneous">
    <text evidence="1">HIV-1 lineages are divided in three main groups, M (for Major), O (for Outlier), and N (for New, or Non-M, Non-O). The vast majority of strains found worldwide belong to the group M. Group O seems to be endemic to and largely confined to Cameroon and neighboring countries in West Central Africa, where these viruses represent a small minority of HIV-1 strains. The group N is represented by a limited number of isolates from Cameroonian persons. The group M is further subdivided in 9 clades or subtypes (A to D, F to H, J and K).</text>
</comment>
<comment type="similarity">
    <text evidence="1">Belongs to the lentivirus primate group Nef protein family.</text>
</comment>